<evidence type="ECO:0000255" key="1">
    <source>
        <dbReference type="HAMAP-Rule" id="MF_01255"/>
    </source>
</evidence>
<organism>
    <name type="scientific">Mycobacterium sp. (strain MCS)</name>
    <dbReference type="NCBI Taxonomy" id="164756"/>
    <lineage>
        <taxon>Bacteria</taxon>
        <taxon>Bacillati</taxon>
        <taxon>Actinomycetota</taxon>
        <taxon>Actinomycetes</taxon>
        <taxon>Mycobacteriales</taxon>
        <taxon>Mycobacteriaceae</taxon>
        <taxon>Mycobacterium</taxon>
    </lineage>
</organism>
<keyword id="KW-0456">Lyase</keyword>
<protein>
    <recommendedName>
        <fullName evidence="1">L-ectoine synthase</fullName>
        <ecNumber evidence="1">4.2.1.108</ecNumber>
    </recommendedName>
    <alternativeName>
        <fullName evidence="1">N-acetyldiaminobutyrate dehydratase</fullName>
    </alternativeName>
</protein>
<proteinExistence type="inferred from homology"/>
<reference key="1">
    <citation type="submission" date="2006-06" db="EMBL/GenBank/DDBJ databases">
        <title>Complete sequence of chromosome of Mycobacterium sp. MCS.</title>
        <authorList>
            <consortium name="US DOE Joint Genome Institute"/>
            <person name="Copeland A."/>
            <person name="Lucas S."/>
            <person name="Lapidus A."/>
            <person name="Barry K."/>
            <person name="Detter J.C."/>
            <person name="Glavina del Rio T."/>
            <person name="Hammon N."/>
            <person name="Israni S."/>
            <person name="Dalin E."/>
            <person name="Tice H."/>
            <person name="Pitluck S."/>
            <person name="Martinez M."/>
            <person name="Schmutz J."/>
            <person name="Larimer F."/>
            <person name="Land M."/>
            <person name="Hauser L."/>
            <person name="Kyrpides N."/>
            <person name="Kim E."/>
            <person name="Miller C.D."/>
            <person name="Hughes J.E."/>
            <person name="Anderson A.J."/>
            <person name="Sims R.C."/>
            <person name="Richardson P."/>
        </authorList>
    </citation>
    <scope>NUCLEOTIDE SEQUENCE [LARGE SCALE GENOMIC DNA]</scope>
    <source>
        <strain>MCS</strain>
    </source>
</reference>
<name>ECTC_MYCSS</name>
<accession>Q1B487</accession>
<gene>
    <name evidence="1" type="primary">ectC</name>
    <name type="ordered locus">Mmcs_4192</name>
</gene>
<feature type="chain" id="PRO_1000067233" description="L-ectoine synthase">
    <location>
        <begin position="1"/>
        <end position="129"/>
    </location>
</feature>
<comment type="function">
    <text evidence="1">Catalyzes the circularization of gamma-N-acetyl-alpha,gamma-diaminobutyric acid (ADABA) to ectoine (1,4,5,6-tetrahydro-2-methyl-4-pyrimidine carboxylic acid), which is an excellent osmoprotectant.</text>
</comment>
<comment type="catalytic activity">
    <reaction evidence="1">
        <text>(2S)-4-acetamido-2-aminobutanoate = L-ectoine + H2O</text>
        <dbReference type="Rhea" id="RHEA:17281"/>
        <dbReference type="ChEBI" id="CHEBI:15377"/>
        <dbReference type="ChEBI" id="CHEBI:58515"/>
        <dbReference type="ChEBI" id="CHEBI:58929"/>
        <dbReference type="EC" id="4.2.1.108"/>
    </reaction>
</comment>
<comment type="pathway">
    <text evidence="1">Amine and polyamine biosynthesis; ectoine biosynthesis; L-ectoine from L-aspartate 4-semialdehyde: step 3/3.</text>
</comment>
<comment type="similarity">
    <text evidence="1">Belongs to the ectoine synthase family.</text>
</comment>
<dbReference type="EC" id="4.2.1.108" evidence="1"/>
<dbReference type="EMBL" id="CP000384">
    <property type="protein sequence ID" value="ABG10297.1"/>
    <property type="molecule type" value="Genomic_DNA"/>
</dbReference>
<dbReference type="SMR" id="Q1B487"/>
<dbReference type="KEGG" id="mmc:Mmcs_4192"/>
<dbReference type="HOGENOM" id="CLU_154525_0_0_11"/>
<dbReference type="BioCyc" id="MSP164756:G1G6O-4278-MONOMER"/>
<dbReference type="UniPathway" id="UPA00067">
    <property type="reaction ID" value="UER00123"/>
</dbReference>
<dbReference type="GO" id="GO:0033990">
    <property type="term" value="F:ectoine synthase activity"/>
    <property type="evidence" value="ECO:0007669"/>
    <property type="project" value="UniProtKB-EC"/>
</dbReference>
<dbReference type="GO" id="GO:0019491">
    <property type="term" value="P:ectoine biosynthetic process"/>
    <property type="evidence" value="ECO:0007669"/>
    <property type="project" value="UniProtKB-UniRule"/>
</dbReference>
<dbReference type="CDD" id="cd06978">
    <property type="entry name" value="cupin_EctC"/>
    <property type="match status" value="1"/>
</dbReference>
<dbReference type="Gene3D" id="2.60.120.10">
    <property type="entry name" value="Jelly Rolls"/>
    <property type="match status" value="1"/>
</dbReference>
<dbReference type="HAMAP" id="MF_01255">
    <property type="entry name" value="Ectoine_synth"/>
    <property type="match status" value="1"/>
</dbReference>
<dbReference type="InterPro" id="IPR010462">
    <property type="entry name" value="Ectoine_synth"/>
</dbReference>
<dbReference type="InterPro" id="IPR014710">
    <property type="entry name" value="RmlC-like_jellyroll"/>
</dbReference>
<dbReference type="InterPro" id="IPR011051">
    <property type="entry name" value="RmlC_Cupin_sf"/>
</dbReference>
<dbReference type="NCBIfam" id="NF009806">
    <property type="entry name" value="PRK13290.1"/>
    <property type="match status" value="1"/>
</dbReference>
<dbReference type="PANTHER" id="PTHR39289">
    <property type="match status" value="1"/>
</dbReference>
<dbReference type="PANTHER" id="PTHR39289:SF1">
    <property type="entry name" value="L-ECTOINE SYNTHASE"/>
    <property type="match status" value="1"/>
</dbReference>
<dbReference type="Pfam" id="PF06339">
    <property type="entry name" value="Ectoine_synth"/>
    <property type="match status" value="1"/>
</dbReference>
<dbReference type="SUPFAM" id="SSF51182">
    <property type="entry name" value="RmlC-like cupins"/>
    <property type="match status" value="1"/>
</dbReference>
<sequence>MIVRTTQAITGTERDVAAKDWRSKRIVLADDGVGFSFHETTINANSVSEFHYRHHVEAVWVVEGSGTLTDHETGEEFPLLPGTMYLLDGHERHRVTCHEQLRMLCVFNPPVTGQEVHDESGAYPAPVAS</sequence>